<accession>Q9NZS2</accession>
<accession>A0A0C4DGY9</accession>
<accession>Q4KMT5</accession>
<accession>Q96PR2</accession>
<accession>Q96PR3</accession>
<accession>Q9NZS1</accession>
<name>KLRF1_HUMAN</name>
<dbReference type="EMBL" id="AF175206">
    <property type="protein sequence ID" value="AAF37804.1"/>
    <property type="molecule type" value="mRNA"/>
</dbReference>
<dbReference type="EMBL" id="AF175207">
    <property type="protein sequence ID" value="AAF37805.1"/>
    <property type="molecule type" value="mRNA"/>
</dbReference>
<dbReference type="EMBL" id="AF267244">
    <property type="protein sequence ID" value="AAL14873.1"/>
    <property type="molecule type" value="mRNA"/>
</dbReference>
<dbReference type="EMBL" id="AF267245">
    <property type="protein sequence ID" value="AAL14874.1"/>
    <property type="molecule type" value="mRNA"/>
</dbReference>
<dbReference type="EMBL" id="AJ305370">
    <property type="protein sequence ID" value="CAC29425.1"/>
    <property type="molecule type" value="mRNA"/>
</dbReference>
<dbReference type="EMBL" id="AC007068">
    <property type="status" value="NOT_ANNOTATED_CDS"/>
    <property type="molecule type" value="Genomic_DNA"/>
</dbReference>
<dbReference type="EMBL" id="KF573680">
    <property type="status" value="NOT_ANNOTATED_CDS"/>
    <property type="molecule type" value="Genomic_DNA"/>
</dbReference>
<dbReference type="EMBL" id="CH471094">
    <property type="protein sequence ID" value="EAW96124.1"/>
    <property type="molecule type" value="Genomic_DNA"/>
</dbReference>
<dbReference type="EMBL" id="BC098354">
    <property type="protein sequence ID" value="AAH98354.1"/>
    <property type="molecule type" value="mRNA"/>
</dbReference>
<dbReference type="CCDS" id="CCDS41750.1">
    <molecule id="Q9NZS2-1"/>
</dbReference>
<dbReference type="CCDS" id="CCDS76526.1">
    <molecule id="Q9NZS2-2"/>
</dbReference>
<dbReference type="CCDS" id="CCDS76527.1">
    <molecule id="Q9NZS2-3"/>
</dbReference>
<dbReference type="RefSeq" id="NP_001278751.1">
    <molecule id="Q9NZS2-2"/>
    <property type="nucleotide sequence ID" value="NM_001291822.2"/>
</dbReference>
<dbReference type="RefSeq" id="NP_001278752.1">
    <molecule id="Q9NZS2-3"/>
    <property type="nucleotide sequence ID" value="NM_001291823.2"/>
</dbReference>
<dbReference type="RefSeq" id="NP_057607.1">
    <molecule id="Q9NZS2-1"/>
    <property type="nucleotide sequence ID" value="NM_016523.3"/>
</dbReference>
<dbReference type="SMR" id="Q9NZS2"/>
<dbReference type="BioGRID" id="119491">
    <property type="interactions" value="19"/>
</dbReference>
<dbReference type="DIP" id="DIP-58613N"/>
<dbReference type="FunCoup" id="Q9NZS2">
    <property type="interactions" value="96"/>
</dbReference>
<dbReference type="IntAct" id="Q9NZS2">
    <property type="interactions" value="4"/>
</dbReference>
<dbReference type="STRING" id="9606.ENSP00000483713"/>
<dbReference type="GlyCosmos" id="Q9NZS2">
    <property type="glycosylation" value="4 sites, No reported glycans"/>
</dbReference>
<dbReference type="GlyGen" id="Q9NZS2">
    <property type="glycosylation" value="4 sites"/>
</dbReference>
<dbReference type="iPTMnet" id="Q9NZS2"/>
<dbReference type="PhosphoSitePlus" id="Q9NZS2"/>
<dbReference type="BioMuta" id="KLRF1"/>
<dbReference type="DMDM" id="317373373"/>
<dbReference type="PaxDb" id="9606-ENSP00000483713"/>
<dbReference type="PeptideAtlas" id="Q9NZS2"/>
<dbReference type="Antibodypedia" id="23183">
    <property type="antibodies" value="220 antibodies from 27 providers"/>
</dbReference>
<dbReference type="DNASU" id="51348"/>
<dbReference type="Ensembl" id="ENST00000279545.7">
    <molecule id="Q9NZS2-2"/>
    <property type="protein sequence ID" value="ENSP00000279545.4"/>
    <property type="gene ID" value="ENSG00000150045.12"/>
</dbReference>
<dbReference type="Ensembl" id="ENST00000354855.7">
    <molecule id="Q9NZS2-3"/>
    <property type="protein sequence ID" value="ENSP00000346919.3"/>
    <property type="gene ID" value="ENSG00000150045.12"/>
</dbReference>
<dbReference type="Ensembl" id="ENST00000612321.4">
    <molecule id="Q9NZS2-4"/>
    <property type="protein sequence ID" value="ENSP00000483880.1"/>
    <property type="gene ID" value="ENSG00000150045.12"/>
</dbReference>
<dbReference type="Ensembl" id="ENST00000617889.5">
    <molecule id="Q9NZS2-1"/>
    <property type="protein sequence ID" value="ENSP00000483713.1"/>
    <property type="gene ID" value="ENSG00000150045.12"/>
</dbReference>
<dbReference type="GeneID" id="51348"/>
<dbReference type="KEGG" id="hsa:51348"/>
<dbReference type="MANE-Select" id="ENST00000617889.5">
    <property type="protein sequence ID" value="ENSP00000483713.1"/>
    <property type="RefSeq nucleotide sequence ID" value="NM_016523.3"/>
    <property type="RefSeq protein sequence ID" value="NP_057607.1"/>
</dbReference>
<dbReference type="UCSC" id="uc009zgy.4">
    <molecule id="Q9NZS2-1"/>
    <property type="organism name" value="human"/>
</dbReference>
<dbReference type="AGR" id="HGNC:13342"/>
<dbReference type="CTD" id="51348"/>
<dbReference type="DisGeNET" id="51348"/>
<dbReference type="GeneCards" id="KLRF1"/>
<dbReference type="HGNC" id="HGNC:13342">
    <property type="gene designation" value="KLRF1"/>
</dbReference>
<dbReference type="HPA" id="ENSG00000150045">
    <property type="expression patterns" value="Tissue enhanced (bone marrow, lymphoid tissue)"/>
</dbReference>
<dbReference type="MIM" id="605029">
    <property type="type" value="gene"/>
</dbReference>
<dbReference type="neXtProt" id="NX_Q9NZS2"/>
<dbReference type="OpenTargets" id="ENSG00000150045"/>
<dbReference type="PharmGKB" id="PA30169"/>
<dbReference type="VEuPathDB" id="HostDB:ENSG00000150045"/>
<dbReference type="eggNOG" id="KOG4297">
    <property type="taxonomic scope" value="Eukaryota"/>
</dbReference>
<dbReference type="GeneTree" id="ENSGT00940000163227"/>
<dbReference type="HOGENOM" id="CLU_197693_0_0_1"/>
<dbReference type="InParanoid" id="Q9NZS2"/>
<dbReference type="OMA" id="YWFSSEL"/>
<dbReference type="OrthoDB" id="538816at2759"/>
<dbReference type="PAN-GO" id="Q9NZS2">
    <property type="GO annotations" value="1 GO annotation based on evolutionary models"/>
</dbReference>
<dbReference type="PhylomeDB" id="Q9NZS2"/>
<dbReference type="TreeFam" id="TF337735"/>
<dbReference type="PathwayCommons" id="Q9NZS2"/>
<dbReference type="Reactome" id="R-HSA-198933">
    <property type="pathway name" value="Immunoregulatory interactions between a Lymphoid and a non-Lymphoid cell"/>
</dbReference>
<dbReference type="SignaLink" id="Q9NZS2"/>
<dbReference type="BioGRID-ORCS" id="51348">
    <property type="hits" value="8 hits in 1144 CRISPR screens"/>
</dbReference>
<dbReference type="ChiTaRS" id="KLRF1">
    <property type="organism name" value="human"/>
</dbReference>
<dbReference type="GenomeRNAi" id="51348"/>
<dbReference type="Pharos" id="Q9NZS2">
    <property type="development level" value="Tbio"/>
</dbReference>
<dbReference type="PRO" id="PR:Q9NZS2"/>
<dbReference type="Proteomes" id="UP000005640">
    <property type="component" value="Chromosome 12"/>
</dbReference>
<dbReference type="RNAct" id="Q9NZS2">
    <property type="molecule type" value="protein"/>
</dbReference>
<dbReference type="Bgee" id="ENSG00000150045">
    <property type="expression patterns" value="Expressed in granulocyte and 101 other cell types or tissues"/>
</dbReference>
<dbReference type="ExpressionAtlas" id="Q9NZS2">
    <property type="expression patterns" value="baseline and differential"/>
</dbReference>
<dbReference type="GO" id="GO:0016020">
    <property type="term" value="C:membrane"/>
    <property type="evidence" value="ECO:0000304"/>
    <property type="project" value="UniProtKB"/>
</dbReference>
<dbReference type="GO" id="GO:0005886">
    <property type="term" value="C:plasma membrane"/>
    <property type="evidence" value="ECO:0000318"/>
    <property type="project" value="GO_Central"/>
</dbReference>
<dbReference type="GO" id="GO:0030246">
    <property type="term" value="F:carbohydrate binding"/>
    <property type="evidence" value="ECO:0007669"/>
    <property type="project" value="UniProtKB-KW"/>
</dbReference>
<dbReference type="GO" id="GO:0032393">
    <property type="term" value="F:MHC class I receptor activity"/>
    <property type="evidence" value="ECO:0000304"/>
    <property type="project" value="UniProtKB"/>
</dbReference>
<dbReference type="GO" id="GO:0004888">
    <property type="term" value="F:transmembrane signaling receptor activity"/>
    <property type="evidence" value="ECO:0000314"/>
    <property type="project" value="UniProt"/>
</dbReference>
<dbReference type="GO" id="GO:0007166">
    <property type="term" value="P:cell surface receptor signaling pathway"/>
    <property type="evidence" value="ECO:0000304"/>
    <property type="project" value="ProtInc"/>
</dbReference>
<dbReference type="GO" id="GO:0045087">
    <property type="term" value="P:innate immune response"/>
    <property type="evidence" value="ECO:0007669"/>
    <property type="project" value="UniProtKB-KW"/>
</dbReference>
<dbReference type="GO" id="GO:0051132">
    <property type="term" value="P:NK T cell activation"/>
    <property type="evidence" value="ECO:0000314"/>
    <property type="project" value="UniProt"/>
</dbReference>
<dbReference type="CDD" id="cd03593">
    <property type="entry name" value="CLECT_NK_receptors_like"/>
    <property type="match status" value="1"/>
</dbReference>
<dbReference type="FunFam" id="3.10.100.10:FF:000080">
    <property type="entry name" value="Killer cell lectin-like receptor subfamily F member 1"/>
    <property type="match status" value="1"/>
</dbReference>
<dbReference type="Gene3D" id="3.10.100.10">
    <property type="entry name" value="Mannose-Binding Protein A, subunit A"/>
    <property type="match status" value="1"/>
</dbReference>
<dbReference type="InterPro" id="IPR001304">
    <property type="entry name" value="C-type_lectin-like"/>
</dbReference>
<dbReference type="InterPro" id="IPR016186">
    <property type="entry name" value="C-type_lectin-like/link_sf"/>
</dbReference>
<dbReference type="InterPro" id="IPR051379">
    <property type="entry name" value="C-type_Lectin_Receptor_IMM"/>
</dbReference>
<dbReference type="InterPro" id="IPR016187">
    <property type="entry name" value="CTDL_fold"/>
</dbReference>
<dbReference type="InterPro" id="IPR033992">
    <property type="entry name" value="NKR-like_CTLD"/>
</dbReference>
<dbReference type="PANTHER" id="PTHR46746:SF7">
    <property type="entry name" value="KILLER CELL LECTIN-LIKE RECEPTOR SUBFAMILY F MEMBER 1"/>
    <property type="match status" value="1"/>
</dbReference>
<dbReference type="PANTHER" id="PTHR46746">
    <property type="entry name" value="KILLER CELL LECTIN-LIKE RECEPTOR SUBFAMILY F MEMBER 2"/>
    <property type="match status" value="1"/>
</dbReference>
<dbReference type="Pfam" id="PF00059">
    <property type="entry name" value="Lectin_C"/>
    <property type="match status" value="1"/>
</dbReference>
<dbReference type="SMART" id="SM00034">
    <property type="entry name" value="CLECT"/>
    <property type="match status" value="1"/>
</dbReference>
<dbReference type="SUPFAM" id="SSF56436">
    <property type="entry name" value="C-type lectin-like"/>
    <property type="match status" value="1"/>
</dbReference>
<dbReference type="PROSITE" id="PS50041">
    <property type="entry name" value="C_TYPE_LECTIN_2"/>
    <property type="match status" value="1"/>
</dbReference>
<feature type="chain" id="PRO_0000046591" description="Killer cell lectin-like receptor subfamily F member 1">
    <location>
        <begin position="1"/>
        <end position="231"/>
    </location>
</feature>
<feature type="topological domain" description="Cytoplasmic" evidence="1">
    <location>
        <begin position="1"/>
        <end position="38"/>
    </location>
</feature>
<feature type="transmembrane region" description="Helical; Signal-anchor for type II membrane protein" evidence="1">
    <location>
        <begin position="39"/>
        <end position="59"/>
    </location>
</feature>
<feature type="topological domain" description="Extracellular" evidence="1">
    <location>
        <begin position="60"/>
        <end position="231"/>
    </location>
</feature>
<feature type="domain" description="C-type lectin" evidence="2">
    <location>
        <begin position="121"/>
        <end position="230"/>
    </location>
</feature>
<feature type="modified residue" description="Phosphotyrosine" evidence="6">
    <location>
        <position position="7"/>
    </location>
</feature>
<feature type="glycosylation site" description="N-linked (GlcNAc...) asparagine" evidence="1">
    <location>
        <position position="77"/>
    </location>
</feature>
<feature type="glycosylation site" description="N-linked (GlcNAc...) asparagine" evidence="1">
    <location>
        <position position="91"/>
    </location>
</feature>
<feature type="glycosylation site" description="N-linked (GlcNAc...) asparagine" evidence="1">
    <location>
        <position position="96"/>
    </location>
</feature>
<feature type="glycosylation site" description="N-linked (GlcNAc...) asparagine" evidence="1">
    <location>
        <position position="176"/>
    </location>
</feature>
<feature type="disulfide bond" evidence="2">
    <location>
        <begin position="142"/>
        <end position="229"/>
    </location>
</feature>
<feature type="disulfide bond" evidence="2">
    <location>
        <begin position="208"/>
        <end position="221"/>
    </location>
</feature>
<feature type="splice variant" id="VSP_010393" description="In isoform 4." evidence="8">
    <original>VSQGVLLKCQKGSCSNA</original>
    <variation>GFYTEKPKTIKLRMDWA</variation>
    <location>
        <begin position="62"/>
        <end position="78"/>
    </location>
</feature>
<feature type="splice variant" id="VSP_010390" description="In isoform 3." evidence="8">
    <original>VSQ</original>
    <variation>DSS</variation>
    <location>
        <begin position="62"/>
        <end position="64"/>
    </location>
</feature>
<feature type="splice variant" id="VSP_010391" description="In isoform 2." evidence="7">
    <location>
        <begin position="63"/>
        <end position="112"/>
    </location>
</feature>
<feature type="splice variant" id="VSP_010392" description="In isoform 3." evidence="8">
    <location>
        <begin position="65"/>
        <end position="231"/>
    </location>
</feature>
<feature type="splice variant" id="VSP_010394" description="In isoform 4." evidence="8">
    <location>
        <begin position="79"/>
        <end position="231"/>
    </location>
</feature>
<feature type="sequence variant" id="VAR_047544" description="In dbSNP:rs2232548.">
    <original>L</original>
    <variation>F</variation>
    <location>
        <position position="67"/>
    </location>
</feature>
<feature type="mutagenesis site" description="Complete loss of cytolysis." evidence="6">
    <original>Y</original>
    <variation>F</variation>
    <location>
        <position position="7"/>
    </location>
</feature>
<protein>
    <recommendedName>
        <fullName>Killer cell lectin-like receptor subfamily F member 1</fullName>
        <shortName>Lectin-like receptor F1</shortName>
    </recommendedName>
    <alternativeName>
        <fullName>Activating coreceptor NKp80</fullName>
    </alternativeName>
    <alternativeName>
        <fullName>C-type lectin domain family 5 member C</fullName>
    </alternativeName>
</protein>
<reference key="1">
    <citation type="journal article" date="2000" name="Eur. J. Immunol.">
        <title>Human KLRF1, a novel member of the killer cell lectin-like receptor gene family: molecular characterization, genomic structure, physical mapping to the NK gene complex and expression analysis.</title>
        <authorList>
            <person name="Roda-Navarro P."/>
            <person name="Arce I."/>
            <person name="Renedo M."/>
            <person name="Montgomery K."/>
            <person name="Kucherlapati R."/>
            <person name="Fernandez-Ruiz E."/>
        </authorList>
    </citation>
    <scope>NUCLEOTIDE SEQUENCE [MRNA] (ISOFORMS 1 AND 2)</scope>
    <scope>TISSUE SPECIFICITY</scope>
</reference>
<reference key="2">
    <citation type="journal article" date="2001" name="Biochim. Biophys. Acta">
        <title>Molecular characterization of two novel alternative spliced variants of the KLRF1 gene and subcellular distribution of KLRF1 isoforms.</title>
        <authorList>
            <person name="Roda-Navarro P."/>
            <person name="Hernanz-Falcon P."/>
            <person name="Arce I."/>
            <person name="Fernandez-Ruiz E."/>
        </authorList>
    </citation>
    <scope>NUCLEOTIDE SEQUENCE [MRNA] (ISOFORMS 3 AND 4)</scope>
</reference>
<reference key="3">
    <citation type="journal article" date="2001" name="Eur. J. Immunol.">
        <title>Identification of NKp80, a novel triggering molecule expressed by human natural killer cells.</title>
        <authorList>
            <person name="Vitale M."/>
            <person name="Falco M."/>
            <person name="Castriconi R."/>
            <person name="Parolini S."/>
            <person name="Zambello R."/>
            <person name="Semenzato G."/>
            <person name="Biassoni R."/>
            <person name="Bottino C."/>
            <person name="Moretta L."/>
            <person name="Moretta A."/>
        </authorList>
    </citation>
    <scope>NUCLEOTIDE SEQUENCE [MRNA] (ISOFORM 1)</scope>
    <scope>SUBUNIT</scope>
    <source>
        <tissue>Lymphoid tissue</tissue>
    </source>
</reference>
<reference key="4">
    <citation type="journal article" date="2006" name="Nature">
        <title>The finished DNA sequence of human chromosome 12.</title>
        <authorList>
            <person name="Scherer S.E."/>
            <person name="Muzny D.M."/>
            <person name="Buhay C.J."/>
            <person name="Chen R."/>
            <person name="Cree A."/>
            <person name="Ding Y."/>
            <person name="Dugan-Rocha S."/>
            <person name="Gill R."/>
            <person name="Gunaratne P."/>
            <person name="Harris R.A."/>
            <person name="Hawes A.C."/>
            <person name="Hernandez J."/>
            <person name="Hodgson A.V."/>
            <person name="Hume J."/>
            <person name="Jackson A."/>
            <person name="Khan Z.M."/>
            <person name="Kovar-Smith C."/>
            <person name="Lewis L.R."/>
            <person name="Lozado R.J."/>
            <person name="Metzker M.L."/>
            <person name="Milosavljevic A."/>
            <person name="Miner G.R."/>
            <person name="Montgomery K.T."/>
            <person name="Morgan M.B."/>
            <person name="Nazareth L.V."/>
            <person name="Scott G."/>
            <person name="Sodergren E."/>
            <person name="Song X.-Z."/>
            <person name="Steffen D."/>
            <person name="Lovering R.C."/>
            <person name="Wheeler D.A."/>
            <person name="Worley K.C."/>
            <person name="Yuan Y."/>
            <person name="Zhang Z."/>
            <person name="Adams C.Q."/>
            <person name="Ansari-Lari M.A."/>
            <person name="Ayele M."/>
            <person name="Brown M.J."/>
            <person name="Chen G."/>
            <person name="Chen Z."/>
            <person name="Clerc-Blankenburg K.P."/>
            <person name="Davis C."/>
            <person name="Delgado O."/>
            <person name="Dinh H.H."/>
            <person name="Draper H."/>
            <person name="Gonzalez-Garay M.L."/>
            <person name="Havlak P."/>
            <person name="Jackson L.R."/>
            <person name="Jacob L.S."/>
            <person name="Kelly S.H."/>
            <person name="Li L."/>
            <person name="Li Z."/>
            <person name="Liu J."/>
            <person name="Liu W."/>
            <person name="Lu J."/>
            <person name="Maheshwari M."/>
            <person name="Nguyen B.-V."/>
            <person name="Okwuonu G.O."/>
            <person name="Pasternak S."/>
            <person name="Perez L.M."/>
            <person name="Plopper F.J.H."/>
            <person name="Santibanez J."/>
            <person name="Shen H."/>
            <person name="Tabor P.E."/>
            <person name="Verduzco D."/>
            <person name="Waldron L."/>
            <person name="Wang Q."/>
            <person name="Williams G.A."/>
            <person name="Zhang J."/>
            <person name="Zhou J."/>
            <person name="Allen C.C."/>
            <person name="Amin A.G."/>
            <person name="Anyalebechi V."/>
            <person name="Bailey M."/>
            <person name="Barbaria J.A."/>
            <person name="Bimage K.E."/>
            <person name="Bryant N.P."/>
            <person name="Burch P.E."/>
            <person name="Burkett C.E."/>
            <person name="Burrell K.L."/>
            <person name="Calderon E."/>
            <person name="Cardenas V."/>
            <person name="Carter K."/>
            <person name="Casias K."/>
            <person name="Cavazos I."/>
            <person name="Cavazos S.R."/>
            <person name="Ceasar H."/>
            <person name="Chacko J."/>
            <person name="Chan S.N."/>
            <person name="Chavez D."/>
            <person name="Christopoulos C."/>
            <person name="Chu J."/>
            <person name="Cockrell R."/>
            <person name="Cox C.D."/>
            <person name="Dang M."/>
            <person name="Dathorne S.R."/>
            <person name="David R."/>
            <person name="Davis C.M."/>
            <person name="Davy-Carroll L."/>
            <person name="Deshazo D.R."/>
            <person name="Donlin J.E."/>
            <person name="D'Souza L."/>
            <person name="Eaves K.A."/>
            <person name="Egan A."/>
            <person name="Emery-Cohen A.J."/>
            <person name="Escotto M."/>
            <person name="Flagg N."/>
            <person name="Forbes L.D."/>
            <person name="Gabisi A.M."/>
            <person name="Garza M."/>
            <person name="Hamilton C."/>
            <person name="Henderson N."/>
            <person name="Hernandez O."/>
            <person name="Hines S."/>
            <person name="Hogues M.E."/>
            <person name="Huang M."/>
            <person name="Idlebird D.G."/>
            <person name="Johnson R."/>
            <person name="Jolivet A."/>
            <person name="Jones S."/>
            <person name="Kagan R."/>
            <person name="King L.M."/>
            <person name="Leal B."/>
            <person name="Lebow H."/>
            <person name="Lee S."/>
            <person name="LeVan J.M."/>
            <person name="Lewis L.C."/>
            <person name="London P."/>
            <person name="Lorensuhewa L.M."/>
            <person name="Loulseged H."/>
            <person name="Lovett D.A."/>
            <person name="Lucier A."/>
            <person name="Lucier R.L."/>
            <person name="Ma J."/>
            <person name="Madu R.C."/>
            <person name="Mapua P."/>
            <person name="Martindale A.D."/>
            <person name="Martinez E."/>
            <person name="Massey E."/>
            <person name="Mawhiney S."/>
            <person name="Meador M.G."/>
            <person name="Mendez S."/>
            <person name="Mercado C."/>
            <person name="Mercado I.C."/>
            <person name="Merritt C.E."/>
            <person name="Miner Z.L."/>
            <person name="Minja E."/>
            <person name="Mitchell T."/>
            <person name="Mohabbat F."/>
            <person name="Mohabbat K."/>
            <person name="Montgomery B."/>
            <person name="Moore N."/>
            <person name="Morris S."/>
            <person name="Munidasa M."/>
            <person name="Ngo R.N."/>
            <person name="Nguyen N.B."/>
            <person name="Nickerson E."/>
            <person name="Nwaokelemeh O.O."/>
            <person name="Nwokenkwo S."/>
            <person name="Obregon M."/>
            <person name="Oguh M."/>
            <person name="Oragunye N."/>
            <person name="Oviedo R.J."/>
            <person name="Parish B.J."/>
            <person name="Parker D.N."/>
            <person name="Parrish J."/>
            <person name="Parks K.L."/>
            <person name="Paul H.A."/>
            <person name="Payton B.A."/>
            <person name="Perez A."/>
            <person name="Perrin W."/>
            <person name="Pickens A."/>
            <person name="Primus E.L."/>
            <person name="Pu L.-L."/>
            <person name="Puazo M."/>
            <person name="Quiles M.M."/>
            <person name="Quiroz J.B."/>
            <person name="Rabata D."/>
            <person name="Reeves K."/>
            <person name="Ruiz S.J."/>
            <person name="Shao H."/>
            <person name="Sisson I."/>
            <person name="Sonaike T."/>
            <person name="Sorelle R.P."/>
            <person name="Sutton A.E."/>
            <person name="Svatek A.F."/>
            <person name="Svetz L.A."/>
            <person name="Tamerisa K.S."/>
            <person name="Taylor T.R."/>
            <person name="Teague B."/>
            <person name="Thomas N."/>
            <person name="Thorn R.D."/>
            <person name="Trejos Z.Y."/>
            <person name="Trevino B.K."/>
            <person name="Ukegbu O.N."/>
            <person name="Urban J.B."/>
            <person name="Vasquez L.I."/>
            <person name="Vera V.A."/>
            <person name="Villasana D.M."/>
            <person name="Wang L."/>
            <person name="Ward-Moore S."/>
            <person name="Warren J.T."/>
            <person name="Wei X."/>
            <person name="White F."/>
            <person name="Williamson A.L."/>
            <person name="Wleczyk R."/>
            <person name="Wooden H.S."/>
            <person name="Wooden S.H."/>
            <person name="Yen J."/>
            <person name="Yoon L."/>
            <person name="Yoon V."/>
            <person name="Zorrilla S.E."/>
            <person name="Nelson D."/>
            <person name="Kucherlapati R."/>
            <person name="Weinstock G."/>
            <person name="Gibbs R.A."/>
        </authorList>
    </citation>
    <scope>NUCLEOTIDE SEQUENCE [LARGE SCALE GENOMIC DNA]</scope>
</reference>
<reference key="5">
    <citation type="submission" date="2005-07" db="EMBL/GenBank/DDBJ databases">
        <authorList>
            <person name="Mural R.J."/>
            <person name="Istrail S."/>
            <person name="Sutton G.G."/>
            <person name="Florea L."/>
            <person name="Halpern A.L."/>
            <person name="Mobarry C.M."/>
            <person name="Lippert R."/>
            <person name="Walenz B."/>
            <person name="Shatkay H."/>
            <person name="Dew I."/>
            <person name="Miller J.R."/>
            <person name="Flanigan M.J."/>
            <person name="Edwards N.J."/>
            <person name="Bolanos R."/>
            <person name="Fasulo D."/>
            <person name="Halldorsson B.V."/>
            <person name="Hannenhalli S."/>
            <person name="Turner R."/>
            <person name="Yooseph S."/>
            <person name="Lu F."/>
            <person name="Nusskern D.R."/>
            <person name="Shue B.C."/>
            <person name="Zheng X.H."/>
            <person name="Zhong F."/>
            <person name="Delcher A.L."/>
            <person name="Huson D.H."/>
            <person name="Kravitz S.A."/>
            <person name="Mouchard L."/>
            <person name="Reinert K."/>
            <person name="Remington K.A."/>
            <person name="Clark A.G."/>
            <person name="Waterman M.S."/>
            <person name="Eichler E.E."/>
            <person name="Adams M.D."/>
            <person name="Hunkapiller M.W."/>
            <person name="Myers E.W."/>
            <person name="Venter J.C."/>
        </authorList>
    </citation>
    <scope>NUCLEOTIDE SEQUENCE [LARGE SCALE GENOMIC DNA]</scope>
</reference>
<reference key="6">
    <citation type="journal article" date="2004" name="Genome Res.">
        <title>The status, quality, and expansion of the NIH full-length cDNA project: the Mammalian Gene Collection (MGC).</title>
        <authorList>
            <consortium name="The MGC Project Team"/>
        </authorList>
    </citation>
    <scope>NUCLEOTIDE SEQUENCE [LARGE SCALE MRNA] (ISOFORM 1)</scope>
</reference>
<reference key="7">
    <citation type="journal article" date="2006" name="Nat. Immunol.">
        <title>Mutual activation of natural killer cells and monocytes mediated by NKp80-AICL interaction.</title>
        <authorList>
            <person name="Welte S."/>
            <person name="Kuttruff S."/>
            <person name="Waldhauer I."/>
            <person name="Steinle A."/>
        </authorList>
    </citation>
    <scope>FUNCTION</scope>
    <scope>INTERACTION WITH CLEC2B</scope>
</reference>
<reference key="8">
    <citation type="journal article" date="2011" name="J. Immunol.">
        <title>Cutting edge: NKp80 uses an atypical hemi-ITAM to trigger NK cytotoxicity.</title>
        <authorList>
            <person name="Dennehy K.M."/>
            <person name="Klimosch S.N."/>
            <person name="Steinle A."/>
        </authorList>
    </citation>
    <scope>FUNCTION</scope>
    <scope>PHOSPHORYLATION AT TYR-7</scope>
    <scope>MUTAGENESIS OF TYR-7</scope>
</reference>
<keyword id="KW-0025">Alternative splicing</keyword>
<keyword id="KW-1015">Disulfide bond</keyword>
<keyword id="KW-0325">Glycoprotein</keyword>
<keyword id="KW-0391">Immunity</keyword>
<keyword id="KW-0399">Innate immunity</keyword>
<keyword id="KW-0430">Lectin</keyword>
<keyword id="KW-0472">Membrane</keyword>
<keyword id="KW-0597">Phosphoprotein</keyword>
<keyword id="KW-1267">Proteomics identification</keyword>
<keyword id="KW-0675">Receptor</keyword>
<keyword id="KW-1185">Reference proteome</keyword>
<keyword id="KW-0735">Signal-anchor</keyword>
<keyword id="KW-0812">Transmembrane</keyword>
<keyword id="KW-1133">Transmembrane helix</keyword>
<sequence>MQDEERYMTLNVQSKKRSSAQTSQLTFKDYSVTLHWYKILLGISGTVNGILTLTLISLILLVSQGVLLKCQKGSCSNATQYEDTGDLKVNNGTRRNISNKDLCASRSADQTVLCQSEWLKYQGKCYWFSNEMKSWSDSYVYCLERKSHLLIIHDQLEMAFIQKNLRQLNYVWIGLNFTSLKMTWTWVDGSPIDSKIFFIKGPAKENSCAAIKESKIFSETCSSVFKWICQY</sequence>
<organism>
    <name type="scientific">Homo sapiens</name>
    <name type="common">Human</name>
    <dbReference type="NCBI Taxonomy" id="9606"/>
    <lineage>
        <taxon>Eukaryota</taxon>
        <taxon>Metazoa</taxon>
        <taxon>Chordata</taxon>
        <taxon>Craniata</taxon>
        <taxon>Vertebrata</taxon>
        <taxon>Euteleostomi</taxon>
        <taxon>Mammalia</taxon>
        <taxon>Eutheria</taxon>
        <taxon>Euarchontoglires</taxon>
        <taxon>Primates</taxon>
        <taxon>Haplorrhini</taxon>
        <taxon>Catarrhini</taxon>
        <taxon>Hominidae</taxon>
        <taxon>Homo</taxon>
    </lineage>
</organism>
<comment type="function">
    <text evidence="5 6">Functions as an activating receptor involved in immunosurveillance upon binding to various ligands displayed at the surface of myeloid cells. Upon interaction with CLEC2B ligand, stimulates NK-cell cytotoxicity and cytokine production leading to the cytolysis of malignant CLEC2B-expressing myeloid cells. Actviation of the common cytotoxicity pathway involves SRC and SYK kinases (PubMed:21149606).</text>
</comment>
<comment type="subunit">
    <text evidence="4 5">Homodimer (PubMed:11265639). Interacts with CLEC2B (PubMed:17057721).</text>
</comment>
<comment type="subcellular location">
    <subcellularLocation>
        <location evidence="9">Membrane</location>
        <topology evidence="9">Single-pass type II membrane protein</topology>
    </subcellularLocation>
</comment>
<comment type="alternative products">
    <event type="alternative splicing"/>
    <isoform>
        <id>Q9NZS2-1</id>
        <name>1</name>
        <sequence type="displayed"/>
    </isoform>
    <isoform>
        <id>Q9NZS2-2</id>
        <name>2</name>
        <name>KLRF1-s1</name>
        <sequence type="described" ref="VSP_010391"/>
    </isoform>
    <isoform>
        <id>Q9NZS2-3</id>
        <name>3</name>
        <name>KLRF1-s3</name>
        <sequence type="described" ref="VSP_010390 VSP_010392"/>
    </isoform>
    <isoform>
        <id>Q9NZS2-4</id>
        <name>4</name>
        <name>KLRF1-s2</name>
        <sequence type="described" ref="VSP_010393 VSP_010394"/>
    </isoform>
</comment>
<comment type="tissue specificity">
    <text evidence="3">Strongly expressed in peripheral blood leukocytes and spleen, with weaker expression in lymph node and adult liver, and no expression detected in bone marrow, thymus, and fetal liver. Not expressed in brain, heart, placenta, lung, kidney, skeletal muscle, and pancreas. Within peripheral blood leukocyte and immunocyte cell lines, expression was predominant in NK cells but was also detected in monocytes.</text>
</comment>
<comment type="PTM">
    <text evidence="6">Phosphorylated on Tyr-7; this phosphorylation is required for NKp80/KLRF1-mediated cytotoxicity.</text>
</comment>
<comment type="miscellaneous">
    <molecule>Isoform 4</molecule>
    <text evidence="9">May be produced at very low levels due to a premature stop codon in the mRNA, leading to nonsense-mediated mRNA decay.</text>
</comment>
<comment type="online information" name="Functional Glycomics Gateway - Glycan Binding">
    <link uri="http://www.functionalglycomics.org/glycomics/GBPServlet?&amp;operationType=view&amp;cbpId=cbp_hum_Ctlect_241"/>
    <text>KLRF1</text>
</comment>
<gene>
    <name type="primary">KLRF1</name>
    <name type="synonym">CLEC5C</name>
    <name type="synonym">ML</name>
</gene>
<evidence type="ECO:0000255" key="1"/>
<evidence type="ECO:0000255" key="2">
    <source>
        <dbReference type="PROSITE-ProRule" id="PRU00040"/>
    </source>
</evidence>
<evidence type="ECO:0000269" key="3">
    <source>
    </source>
</evidence>
<evidence type="ECO:0000269" key="4">
    <source>
    </source>
</evidence>
<evidence type="ECO:0000269" key="5">
    <source>
    </source>
</evidence>
<evidence type="ECO:0000269" key="6">
    <source>
    </source>
</evidence>
<evidence type="ECO:0000303" key="7">
    <source>
    </source>
</evidence>
<evidence type="ECO:0000303" key="8">
    <source>
    </source>
</evidence>
<evidence type="ECO:0000305" key="9"/>
<proteinExistence type="evidence at protein level"/>